<proteinExistence type="evidence at protein level"/>
<accession>Q9YBX7</accession>
<reference key="1">
    <citation type="journal article" date="1999" name="DNA Res.">
        <title>Complete genome sequence of an aerobic hyper-thermophilic crenarchaeon, Aeropyrum pernix K1.</title>
        <authorList>
            <person name="Kawarabayasi Y."/>
            <person name="Hino Y."/>
            <person name="Horikawa H."/>
            <person name="Yamazaki S."/>
            <person name="Haikawa Y."/>
            <person name="Jin-no K."/>
            <person name="Takahashi M."/>
            <person name="Sekine M."/>
            <person name="Baba S."/>
            <person name="Ankai A."/>
            <person name="Kosugi H."/>
            <person name="Hosoyama A."/>
            <person name="Fukui S."/>
            <person name="Nagai Y."/>
            <person name="Nishijima K."/>
            <person name="Nakazawa H."/>
            <person name="Takamiya M."/>
            <person name="Masuda S."/>
            <person name="Funahashi T."/>
            <person name="Tanaka T."/>
            <person name="Kudoh Y."/>
            <person name="Yamazaki J."/>
            <person name="Kushida N."/>
            <person name="Oguchi A."/>
            <person name="Aoki K."/>
            <person name="Kubota K."/>
            <person name="Nakamura Y."/>
            <person name="Nomura N."/>
            <person name="Sako Y."/>
            <person name="Kikuchi H."/>
        </authorList>
    </citation>
    <scope>NUCLEOTIDE SEQUENCE [LARGE SCALE GENOMIC DNA]</scope>
    <source>
        <strain evidence="6">ATCC 700893 / DSM 11879 / JCM 9820 / NBRC 100138 / K1</strain>
    </source>
</reference>
<reference key="2">
    <citation type="journal article" date="2005" name="FEBS Lett.">
        <title>Gene expression and characterization of two 2-oxoacid:ferredoxin oxidoreductases from Aeropyrum pernix K1.</title>
        <authorList>
            <person name="Nishizawa Y."/>
            <person name="Yabuki T."/>
            <person name="Fukuda E."/>
            <person name="Wakagi T."/>
        </authorList>
    </citation>
    <scope>FUNCTION</scope>
    <scope>CATALYTIC ACTIVITY</scope>
    <scope>BIOPHYSICOCHEMICAL PROPERTIES</scope>
    <scope>SUBUNIT</scope>
    <scope>SUBSTRATE SPECIFICITY</scope>
    <source>
        <strain>ATCC 700893 / DSM 11879 / JCM 9820 / NBRC 100138 / K1</strain>
    </source>
</reference>
<dbReference type="EC" id="1.2.7.11" evidence="3"/>
<dbReference type="EMBL" id="BA000002">
    <property type="protein sequence ID" value="BAA80471.2"/>
    <property type="molecule type" value="Genomic_DNA"/>
</dbReference>
<dbReference type="PIR" id="A72627">
    <property type="entry name" value="A72627"/>
</dbReference>
<dbReference type="RefSeq" id="WP_010866395.1">
    <property type="nucleotide sequence ID" value="NC_000854.2"/>
</dbReference>
<dbReference type="SMR" id="Q9YBX7"/>
<dbReference type="STRING" id="272557.APE_1473.1"/>
<dbReference type="EnsemblBacteria" id="BAA80471">
    <property type="protein sequence ID" value="BAA80471"/>
    <property type="gene ID" value="APE_1473.1"/>
</dbReference>
<dbReference type="GeneID" id="1446038"/>
<dbReference type="KEGG" id="ape:APE_1473.1"/>
<dbReference type="PATRIC" id="fig|272557.25.peg.998"/>
<dbReference type="eggNOG" id="arCOG01606">
    <property type="taxonomic scope" value="Archaea"/>
</dbReference>
<dbReference type="Proteomes" id="UP000002518">
    <property type="component" value="Chromosome"/>
</dbReference>
<dbReference type="GO" id="GO:0018491">
    <property type="term" value="F:2-oxobutyrate synthase activity"/>
    <property type="evidence" value="ECO:0000314"/>
    <property type="project" value="UniProtKB"/>
</dbReference>
<dbReference type="GO" id="GO:0047553">
    <property type="term" value="F:2-oxoglutarate synthase activity"/>
    <property type="evidence" value="ECO:0000314"/>
    <property type="project" value="UniProtKB"/>
</dbReference>
<dbReference type="GO" id="GO:0019164">
    <property type="term" value="F:pyruvate synthase activity"/>
    <property type="evidence" value="ECO:0000314"/>
    <property type="project" value="UniProtKB"/>
</dbReference>
<dbReference type="GO" id="GO:0006979">
    <property type="term" value="P:response to oxidative stress"/>
    <property type="evidence" value="ECO:0007669"/>
    <property type="project" value="TreeGrafter"/>
</dbReference>
<dbReference type="CDD" id="cd07034">
    <property type="entry name" value="TPP_PYR_PFOR_IOR-alpha_like"/>
    <property type="match status" value="1"/>
</dbReference>
<dbReference type="FunFam" id="3.40.50.970:FF:000022">
    <property type="entry name" value="2-oxoglutarate ferredoxin oxidoreductase alpha subunit"/>
    <property type="match status" value="1"/>
</dbReference>
<dbReference type="FunFam" id="3.40.50.920:FF:000009">
    <property type="entry name" value="2-oxoglutarate ferredoxin oxidoreductase subunit alpha"/>
    <property type="match status" value="1"/>
</dbReference>
<dbReference type="Gene3D" id="3.40.50.920">
    <property type="match status" value="1"/>
</dbReference>
<dbReference type="Gene3D" id="3.40.50.970">
    <property type="match status" value="1"/>
</dbReference>
<dbReference type="Gene3D" id="3.40.920.10">
    <property type="entry name" value="Pyruvate-ferredoxin oxidoreductase, PFOR, domain III"/>
    <property type="match status" value="1"/>
</dbReference>
<dbReference type="InterPro" id="IPR022367">
    <property type="entry name" value="2-oxoacid/accept_OxRdtase_asu"/>
</dbReference>
<dbReference type="InterPro" id="IPR053400">
    <property type="entry name" value="2-oxoacid_Fdx_oxidoreductase"/>
</dbReference>
<dbReference type="InterPro" id="IPR033412">
    <property type="entry name" value="PFOR_II"/>
</dbReference>
<dbReference type="InterPro" id="IPR050722">
    <property type="entry name" value="Pyruvate:ferred/Flavod_OxRd"/>
</dbReference>
<dbReference type="InterPro" id="IPR019752">
    <property type="entry name" value="Pyrv/ketoisovalerate_OxRed_cat"/>
</dbReference>
<dbReference type="InterPro" id="IPR002880">
    <property type="entry name" value="Pyrv_Fd/Flavodoxin_OxRdtase_N"/>
</dbReference>
<dbReference type="InterPro" id="IPR002869">
    <property type="entry name" value="Pyrv_flavodox_OxRed_cen"/>
</dbReference>
<dbReference type="InterPro" id="IPR029061">
    <property type="entry name" value="THDP-binding"/>
</dbReference>
<dbReference type="InterPro" id="IPR009014">
    <property type="entry name" value="Transketo_C/PFOR_II"/>
</dbReference>
<dbReference type="NCBIfam" id="TIGR03710">
    <property type="entry name" value="OAFO_sf"/>
    <property type="match status" value="1"/>
</dbReference>
<dbReference type="NCBIfam" id="NF041170">
    <property type="entry name" value="Oxoac_fdxalpha_Archa"/>
    <property type="match status" value="1"/>
</dbReference>
<dbReference type="PANTHER" id="PTHR32154:SF16">
    <property type="entry name" value="PYRUVATE FLAVODOXIN_FERREDOXIN OXIDOREDUCTASE DOMAIN PROTEIN"/>
    <property type="match status" value="1"/>
</dbReference>
<dbReference type="PANTHER" id="PTHR32154">
    <property type="entry name" value="PYRUVATE-FLAVODOXIN OXIDOREDUCTASE-RELATED"/>
    <property type="match status" value="1"/>
</dbReference>
<dbReference type="Pfam" id="PF17147">
    <property type="entry name" value="PFOR_II"/>
    <property type="match status" value="1"/>
</dbReference>
<dbReference type="Pfam" id="PF01558">
    <property type="entry name" value="POR"/>
    <property type="match status" value="1"/>
</dbReference>
<dbReference type="Pfam" id="PF01855">
    <property type="entry name" value="POR_N"/>
    <property type="match status" value="1"/>
</dbReference>
<dbReference type="SUPFAM" id="SSF53323">
    <property type="entry name" value="Pyruvate-ferredoxin oxidoreductase, PFOR, domain III"/>
    <property type="match status" value="1"/>
</dbReference>
<dbReference type="SUPFAM" id="SSF52518">
    <property type="entry name" value="Thiamin diphosphate-binding fold (THDP-binding)"/>
    <property type="match status" value="1"/>
</dbReference>
<dbReference type="SUPFAM" id="SSF52922">
    <property type="entry name" value="TK C-terminal domain-like"/>
    <property type="match status" value="1"/>
</dbReference>
<evidence type="ECO:0000250" key="1">
    <source>
        <dbReference type="UniProtKB" id="P72578"/>
    </source>
</evidence>
<evidence type="ECO:0000250" key="2">
    <source>
        <dbReference type="UniProtKB" id="Q96XT2"/>
    </source>
</evidence>
<evidence type="ECO:0000269" key="3">
    <source>
    </source>
</evidence>
<evidence type="ECO:0000303" key="4">
    <source>
    </source>
</evidence>
<evidence type="ECO:0000312" key="5">
    <source>
        <dbReference type="EMBL" id="BAA80471.2"/>
    </source>
</evidence>
<evidence type="ECO:0000312" key="6">
    <source>
        <dbReference type="Proteomes" id="UP000002518"/>
    </source>
</evidence>
<feature type="chain" id="PRO_0000445537" description="2-oxoacid:ferredoxin oxidoreductase 2, subunit alpha">
    <location>
        <begin position="1"/>
        <end position="642"/>
    </location>
</feature>
<feature type="short sequence motif" description="YPITP motif" evidence="1">
    <location>
        <begin position="263"/>
        <end position="267"/>
    </location>
</feature>
<feature type="binding site" evidence="2">
    <location>
        <position position="266"/>
    </location>
    <ligand>
        <name>substrate</name>
    </ligand>
</feature>
<feature type="binding site" evidence="2">
    <location>
        <position position="356"/>
    </location>
    <ligand>
        <name>substrate</name>
    </ligand>
</feature>
<sequence length="642" mass="69900">MVDISLIIGGPQGGGIESAGQIAIKSMVLLGYEVLGSREYHSNIMGAHSYYHLRVQQHRPRSLKLPVDGVLALDAESVFTHFRDVRPGGILVYDPGTKSTRVDAIQPMAGPLKKRLKSLFDSRGMQPVVESAVKLAEEAGARIVGLPLKEMLKTLSERTGAPVARVSRALNTLGLASMLYMLGVPVEYIEKAISLQFAGKEKVINMNVEAVRIAVDYVREAFGEPESRLPPGPRRGQTMMVATGNDLVAMGKIVGGLGVITYYPITPSSDEALYVEKHSYISIDGPLAEKLGYDKIAVAIVQMEDELASINAVLGAAAAGARASTTTSGPGFSLMNEAVSLAVEAEIPVVVTLWMRAGPSTGMPTRTGQQDLLHSIFSGHGDAPKIVLASGDHVEAFYDAIKAFNWAEEFQTPVIHLLDKYLASSMVSLAREDLDPSKVPITRGKLLDNPPADYRRYEVVEDGISPRARLGSATMVITGLEHDEYGYATEDPVMREIMMFKRERKFKVIEERIPDEEKAVLHGDSEASVALVSFGSTKQPILEALEMLRDEGVRARFAQVRLLYPFPGRLVEEMLEGVEKVIMVEQNLLGQLAMLLRAHTSIKPDSSIVKINGRPLYSFEVAGAVKRILETGEERVVVSHGS</sequence>
<protein>
    <recommendedName>
        <fullName evidence="4">2-oxoacid:ferredoxin oxidoreductase 2, subunit alpha</fullName>
        <shortName evidence="4">OFOR2</shortName>
        <ecNumber evidence="3">1.2.7.11</ecNumber>
    </recommendedName>
</protein>
<gene>
    <name evidence="5" type="ordered locus">APE_1473.1</name>
</gene>
<keyword id="KW-0560">Oxidoreductase</keyword>
<keyword id="KW-0670">Pyruvate</keyword>
<keyword id="KW-1185">Reference proteome</keyword>
<organism>
    <name type="scientific">Aeropyrum pernix (strain ATCC 700893 / DSM 11879 / JCM 9820 / NBRC 100138 / K1)</name>
    <dbReference type="NCBI Taxonomy" id="272557"/>
    <lineage>
        <taxon>Archaea</taxon>
        <taxon>Thermoproteota</taxon>
        <taxon>Thermoprotei</taxon>
        <taxon>Desulfurococcales</taxon>
        <taxon>Desulfurococcaceae</taxon>
        <taxon>Aeropyrum</taxon>
    </lineage>
</organism>
<name>OFOA2_AERPE</name>
<comment type="function">
    <text evidence="3">Catalyzes the coenzyme A-dependent oxidative decarboxylation of different 2-oxoacids such as pyruvate, 2-oxobutyrate, glyoxylate and 2-oxoglutarate to form their CoA derivatives.</text>
</comment>
<comment type="catalytic activity">
    <reaction evidence="3">
        <text>a 2-oxocarboxylate + 2 oxidized [2Fe-2S]-[ferredoxin] + CoA = an acyl-CoA + 2 reduced [2Fe-2S]-[ferredoxin] + CO2 + H(+)</text>
        <dbReference type="Rhea" id="RHEA:42316"/>
        <dbReference type="Rhea" id="RHEA-COMP:10000"/>
        <dbReference type="Rhea" id="RHEA-COMP:10001"/>
        <dbReference type="ChEBI" id="CHEBI:15378"/>
        <dbReference type="ChEBI" id="CHEBI:16526"/>
        <dbReference type="ChEBI" id="CHEBI:33737"/>
        <dbReference type="ChEBI" id="CHEBI:33738"/>
        <dbReference type="ChEBI" id="CHEBI:35179"/>
        <dbReference type="ChEBI" id="CHEBI:57287"/>
        <dbReference type="ChEBI" id="CHEBI:58342"/>
        <dbReference type="EC" id="1.2.7.11"/>
    </reaction>
</comment>
<comment type="biophysicochemical properties">
    <kinetics>
        <KM evidence="3">380 uM for pyruvate (at 80 degrees Celsius)</KM>
        <KM evidence="3">500 uM for 2-oxoglutarate (at 80 degrees Celsius)</KM>
        <Vmax evidence="3">8.0 umol/min/mg enzyme with pyruvate as substrate (at 80 degrees Celsius)</Vmax>
        <Vmax evidence="3">7.46 umol/min/mg enzyme with 2-oxoglutarate as substrate (at 80 degrees Celsius)</Vmax>
    </kinetics>
    <phDependence>
        <text evidence="3">Optimum pH is 8.5.</text>
    </phDependence>
    <temperatureDependence>
        <text evidence="3">Optimum temperature is over 110 degrees Celsius.</text>
    </temperatureDependence>
</comment>
<comment type="subunit">
    <text evidence="3">Heterodimer composed of an alpha and a beta subunit.</text>
</comment>
<comment type="domain">
    <text evidence="1">The Tyr-Pro-Ile-Thr-Pro (YPITP) motif is important for the turnover of the reaction, presumably through its flexibility and mobility.</text>
</comment>